<feature type="chain" id="PRO_0000440105" description="Amino acid transporter AVT1D">
    <location>
        <begin position="1"/>
        <end position="550"/>
    </location>
</feature>
<feature type="transmembrane region" description="Helical; Name=1" evidence="1">
    <location>
        <begin position="164"/>
        <end position="184"/>
    </location>
</feature>
<feature type="transmembrane region" description="Helical; Name=2" evidence="1">
    <location>
        <begin position="189"/>
        <end position="209"/>
    </location>
</feature>
<feature type="transmembrane region" description="Helical; Name=3" evidence="1">
    <location>
        <begin position="236"/>
        <end position="256"/>
    </location>
</feature>
<feature type="transmembrane region" description="Helical; Name=4" evidence="1">
    <location>
        <begin position="264"/>
        <end position="286"/>
    </location>
</feature>
<feature type="transmembrane region" description="Helical; Name=5" evidence="1">
    <location>
        <begin position="308"/>
        <end position="328"/>
    </location>
</feature>
<feature type="transmembrane region" description="Helical; Name=6" evidence="1">
    <location>
        <begin position="345"/>
        <end position="365"/>
    </location>
</feature>
<feature type="transmembrane region" description="Helical; Name=7" evidence="1">
    <location>
        <begin position="375"/>
        <end position="395"/>
    </location>
</feature>
<feature type="transmembrane region" description="Helical; Name=8" evidence="1">
    <location>
        <begin position="424"/>
        <end position="444"/>
    </location>
</feature>
<feature type="transmembrane region" description="Helical; Name=9" evidence="1">
    <location>
        <begin position="459"/>
        <end position="479"/>
    </location>
</feature>
<feature type="transmembrane region" description="Helical; Name=10" evidence="1">
    <location>
        <begin position="481"/>
        <end position="501"/>
    </location>
</feature>
<feature type="transmembrane region" description="Helical; Name=11" evidence="1">
    <location>
        <begin position="521"/>
        <end position="541"/>
    </location>
</feature>
<feature type="region of interest" description="Disordered" evidence="2">
    <location>
        <begin position="1"/>
        <end position="99"/>
    </location>
</feature>
<feature type="compositionally biased region" description="Basic and acidic residues" evidence="2">
    <location>
        <begin position="1"/>
        <end position="16"/>
    </location>
</feature>
<feature type="compositionally biased region" description="Polar residues" evidence="2">
    <location>
        <begin position="84"/>
        <end position="99"/>
    </location>
</feature>
<organism>
    <name type="scientific">Arabidopsis thaliana</name>
    <name type="common">Mouse-ear cress</name>
    <dbReference type="NCBI Taxonomy" id="3702"/>
    <lineage>
        <taxon>Eukaryota</taxon>
        <taxon>Viridiplantae</taxon>
        <taxon>Streptophyta</taxon>
        <taxon>Embryophyta</taxon>
        <taxon>Tracheophyta</taxon>
        <taxon>Spermatophyta</taxon>
        <taxon>Magnoliopsida</taxon>
        <taxon>eudicotyledons</taxon>
        <taxon>Gunneridae</taxon>
        <taxon>Pentapetalae</taxon>
        <taxon>rosids</taxon>
        <taxon>malvids</taxon>
        <taxon>Brassicales</taxon>
        <taxon>Brassicaceae</taxon>
        <taxon>Camelineae</taxon>
        <taxon>Arabidopsis</taxon>
    </lineage>
</organism>
<proteinExistence type="evidence at transcript level"/>
<reference key="1">
    <citation type="journal article" date="2000" name="Nature">
        <title>Sequence and analysis of chromosome 5 of the plant Arabidopsis thaliana.</title>
        <authorList>
            <person name="Tabata S."/>
            <person name="Kaneko T."/>
            <person name="Nakamura Y."/>
            <person name="Kotani H."/>
            <person name="Kato T."/>
            <person name="Asamizu E."/>
            <person name="Miyajima N."/>
            <person name="Sasamoto S."/>
            <person name="Kimura T."/>
            <person name="Hosouchi T."/>
            <person name="Kawashima K."/>
            <person name="Kohara M."/>
            <person name="Matsumoto M."/>
            <person name="Matsuno A."/>
            <person name="Muraki A."/>
            <person name="Nakayama S."/>
            <person name="Nakazaki N."/>
            <person name="Naruo K."/>
            <person name="Okumura S."/>
            <person name="Shinpo S."/>
            <person name="Takeuchi C."/>
            <person name="Wada T."/>
            <person name="Watanabe A."/>
            <person name="Yamada M."/>
            <person name="Yasuda M."/>
            <person name="Sato S."/>
            <person name="de la Bastide M."/>
            <person name="Huang E."/>
            <person name="Spiegel L."/>
            <person name="Gnoj L."/>
            <person name="O'Shaughnessy A."/>
            <person name="Preston R."/>
            <person name="Habermann K."/>
            <person name="Murray J."/>
            <person name="Johnson D."/>
            <person name="Rohlfing T."/>
            <person name="Nelson J."/>
            <person name="Stoneking T."/>
            <person name="Pepin K."/>
            <person name="Spieth J."/>
            <person name="Sekhon M."/>
            <person name="Armstrong J."/>
            <person name="Becker M."/>
            <person name="Belter E."/>
            <person name="Cordum H."/>
            <person name="Cordes M."/>
            <person name="Courtney L."/>
            <person name="Courtney W."/>
            <person name="Dante M."/>
            <person name="Du H."/>
            <person name="Edwards J."/>
            <person name="Fryman J."/>
            <person name="Haakensen B."/>
            <person name="Lamar E."/>
            <person name="Latreille P."/>
            <person name="Leonard S."/>
            <person name="Meyer R."/>
            <person name="Mulvaney E."/>
            <person name="Ozersky P."/>
            <person name="Riley A."/>
            <person name="Strowmatt C."/>
            <person name="Wagner-McPherson C."/>
            <person name="Wollam A."/>
            <person name="Yoakum M."/>
            <person name="Bell M."/>
            <person name="Dedhia N."/>
            <person name="Parnell L."/>
            <person name="Shah R."/>
            <person name="Rodriguez M."/>
            <person name="Hoon See L."/>
            <person name="Vil D."/>
            <person name="Baker J."/>
            <person name="Kirchoff K."/>
            <person name="Toth K."/>
            <person name="King L."/>
            <person name="Bahret A."/>
            <person name="Miller B."/>
            <person name="Marra M.A."/>
            <person name="Martienssen R."/>
            <person name="McCombie W.R."/>
            <person name="Wilson R.K."/>
            <person name="Murphy G."/>
            <person name="Bancroft I."/>
            <person name="Volckaert G."/>
            <person name="Wambutt R."/>
            <person name="Duesterhoeft A."/>
            <person name="Stiekema W."/>
            <person name="Pohl T."/>
            <person name="Entian K.-D."/>
            <person name="Terryn N."/>
            <person name="Hartley N."/>
            <person name="Bent E."/>
            <person name="Johnson S."/>
            <person name="Langham S.-A."/>
            <person name="McCullagh B."/>
            <person name="Robben J."/>
            <person name="Grymonprez B."/>
            <person name="Zimmermann W."/>
            <person name="Ramsperger U."/>
            <person name="Wedler H."/>
            <person name="Balke K."/>
            <person name="Wedler E."/>
            <person name="Peters S."/>
            <person name="van Staveren M."/>
            <person name="Dirkse W."/>
            <person name="Mooijman P."/>
            <person name="Klein Lankhorst R."/>
            <person name="Weitzenegger T."/>
            <person name="Bothe G."/>
            <person name="Rose M."/>
            <person name="Hauf J."/>
            <person name="Berneiser S."/>
            <person name="Hempel S."/>
            <person name="Feldpausch M."/>
            <person name="Lamberth S."/>
            <person name="Villarroel R."/>
            <person name="Gielen J."/>
            <person name="Ardiles W."/>
            <person name="Bents O."/>
            <person name="Lemcke K."/>
            <person name="Kolesov G."/>
            <person name="Mayer K.F.X."/>
            <person name="Rudd S."/>
            <person name="Schoof H."/>
            <person name="Schueller C."/>
            <person name="Zaccaria P."/>
            <person name="Mewes H.-W."/>
            <person name="Bevan M."/>
            <person name="Fransz P.F."/>
        </authorList>
    </citation>
    <scope>NUCLEOTIDE SEQUENCE [LARGE SCALE GENOMIC DNA]</scope>
    <source>
        <strain>cv. Columbia</strain>
    </source>
</reference>
<reference key="2">
    <citation type="journal article" date="2017" name="Plant J.">
        <title>Araport11: a complete reannotation of the Arabidopsis thaliana reference genome.</title>
        <authorList>
            <person name="Cheng C.Y."/>
            <person name="Krishnakumar V."/>
            <person name="Chan A.P."/>
            <person name="Thibaud-Nissen F."/>
            <person name="Schobel S."/>
            <person name="Town C.D."/>
        </authorList>
    </citation>
    <scope>GENOME REANNOTATION</scope>
    <source>
        <strain>cv. Columbia</strain>
    </source>
</reference>
<reference key="3">
    <citation type="journal article" date="2002" name="Science">
        <title>Functional annotation of a full-length Arabidopsis cDNA collection.</title>
        <authorList>
            <person name="Seki M."/>
            <person name="Narusaka M."/>
            <person name="Kamiya A."/>
            <person name="Ishida J."/>
            <person name="Satou M."/>
            <person name="Sakurai T."/>
            <person name="Nakajima M."/>
            <person name="Enju A."/>
            <person name="Akiyama K."/>
            <person name="Oono Y."/>
            <person name="Muramatsu M."/>
            <person name="Hayashizaki Y."/>
            <person name="Kawai J."/>
            <person name="Carninci P."/>
            <person name="Itoh M."/>
            <person name="Ishii Y."/>
            <person name="Arakawa T."/>
            <person name="Shibata K."/>
            <person name="Shinagawa A."/>
            <person name="Shinozaki K."/>
        </authorList>
    </citation>
    <scope>NUCLEOTIDE SEQUENCE [LARGE SCALE MRNA]</scope>
    <source>
        <strain>cv. Columbia</strain>
    </source>
</reference>
<reference key="4">
    <citation type="journal article" date="2017" name="FEBS Lett.">
        <title>Functional identification of AtAVT3, a family of vacuolar amino acid transporters, in Arabidopsis.</title>
        <authorList>
            <person name="Fujiki Y."/>
            <person name="Teshima H."/>
            <person name="Kashiwao S."/>
            <person name="Kawano-Kawada M."/>
            <person name="Ohsumi Y."/>
            <person name="Kakinuma Y."/>
            <person name="Sekito T."/>
        </authorList>
    </citation>
    <scope>GENE FAMILY</scope>
    <scope>NOMENCLATURE</scope>
</reference>
<protein>
    <recommendedName>
        <fullName evidence="4">Amino acid transporter AVT1D</fullName>
        <shortName evidence="3">AtAvt1D</shortName>
    </recommendedName>
</protein>
<name>AVT1D_ARATH</name>
<accession>Q8GYS4</accession>
<accession>Q9LZL4</accession>
<sequence>MKLDEEFLHDRDHSFLTDDEENQAALACSDDEHDGDDDGRRGGENSDSSSPLSRDRSDNNLSDVSNPPWPQSYRQSMDLLTGMTPPSVSFMPQSSSRRLASSFQKKQQSSFCDSLSSSSSKPLLSQPVPDKEETILPVNPQSQLKLSVTDLPLPEPNLCSFSQSVLNGTNVLCGLGLITMPYAIKESGWLGLPILLFFGVITCYTGVLMKRCLESSPGIQTYPDIGQAAFGITGRFIISILLYVELYAACVEYIIMMSDNLSGLFPNVSLSIASGISLDSPQIFAILTTLLVLPTVWLKDLSLLSYLSVGGVLASILLGICLFWVGAVDGIGFHATGRVFDLSNLPVTIGIFGFGYSGHSVFPNIYSSMKDPSRFPLVLVICFSFCTVLYIAVAVCGYTMFGEAVESQFTLNMPKHFFPSKVAVWTAVITPMTKYALTITPIVMSLEELIPTAKMRSRGVSILFRTMLVTSTLVVALSVPFFAIVAALIGSFLAMLVALIFPCLCYLSILKGKLSNTQIGLCIFIIVFGVVSGCCGTYSAISRLANQMTD</sequence>
<dbReference type="EMBL" id="AL162508">
    <property type="protein sequence ID" value="CAB82991.1"/>
    <property type="status" value="ALT_SEQ"/>
    <property type="molecule type" value="Genomic_DNA"/>
</dbReference>
<dbReference type="EMBL" id="CP002688">
    <property type="protein sequence ID" value="AED90441.1"/>
    <property type="molecule type" value="Genomic_DNA"/>
</dbReference>
<dbReference type="EMBL" id="CP002688">
    <property type="protein sequence ID" value="ANM69615.1"/>
    <property type="molecule type" value="Genomic_DNA"/>
</dbReference>
<dbReference type="EMBL" id="AK117421">
    <property type="protein sequence ID" value="BAC42086.1"/>
    <property type="molecule type" value="mRNA"/>
</dbReference>
<dbReference type="PIR" id="T48239">
    <property type="entry name" value="T48239"/>
</dbReference>
<dbReference type="RefSeq" id="NP_001331278.1">
    <property type="nucleotide sequence ID" value="NM_001342649.1"/>
</dbReference>
<dbReference type="RefSeq" id="NP_195838.2">
    <property type="nucleotide sequence ID" value="NM_120296.5"/>
</dbReference>
<dbReference type="SMR" id="Q8GYS4"/>
<dbReference type="FunCoup" id="Q8GYS4">
    <property type="interactions" value="200"/>
</dbReference>
<dbReference type="iPTMnet" id="Q8GYS4"/>
<dbReference type="PaxDb" id="3702-AT5G02180.1"/>
<dbReference type="ProteomicsDB" id="240937"/>
<dbReference type="EnsemblPlants" id="AT5G02180.1">
    <property type="protein sequence ID" value="AT5G02180.1"/>
    <property type="gene ID" value="AT5G02180"/>
</dbReference>
<dbReference type="EnsemblPlants" id="AT5G02180.2">
    <property type="protein sequence ID" value="AT5G02180.2"/>
    <property type="gene ID" value="AT5G02180"/>
</dbReference>
<dbReference type="GeneID" id="831862"/>
<dbReference type="Gramene" id="AT5G02180.1">
    <property type="protein sequence ID" value="AT5G02180.1"/>
    <property type="gene ID" value="AT5G02180"/>
</dbReference>
<dbReference type="Gramene" id="AT5G02180.2">
    <property type="protein sequence ID" value="AT5G02180.2"/>
    <property type="gene ID" value="AT5G02180"/>
</dbReference>
<dbReference type="KEGG" id="ath:AT5G02180"/>
<dbReference type="Araport" id="AT5G02180"/>
<dbReference type="TAIR" id="AT5G02180"/>
<dbReference type="eggNOG" id="KOG1303">
    <property type="taxonomic scope" value="Eukaryota"/>
</dbReference>
<dbReference type="HOGENOM" id="CLU_009646_1_0_1"/>
<dbReference type="InParanoid" id="Q8GYS4"/>
<dbReference type="OMA" id="LAFPICM"/>
<dbReference type="PhylomeDB" id="Q8GYS4"/>
<dbReference type="PRO" id="PR:Q8GYS4"/>
<dbReference type="Proteomes" id="UP000006548">
    <property type="component" value="Chromosome 5"/>
</dbReference>
<dbReference type="ExpressionAtlas" id="Q8GYS4">
    <property type="expression patterns" value="baseline and differential"/>
</dbReference>
<dbReference type="GO" id="GO:0031090">
    <property type="term" value="C:organelle membrane"/>
    <property type="evidence" value="ECO:0007669"/>
    <property type="project" value="UniProtKB-ARBA"/>
</dbReference>
<dbReference type="GO" id="GO:0006865">
    <property type="term" value="P:amino acid transport"/>
    <property type="evidence" value="ECO:0007669"/>
    <property type="project" value="UniProtKB-KW"/>
</dbReference>
<dbReference type="FunFam" id="1.20.1740.10:FF:000047">
    <property type="entry name" value="Amino acid transporter AVT1A"/>
    <property type="match status" value="1"/>
</dbReference>
<dbReference type="InterPro" id="IPR013057">
    <property type="entry name" value="AA_transpt_TM"/>
</dbReference>
<dbReference type="PANTHER" id="PTHR22950">
    <property type="entry name" value="AMINO ACID TRANSPORTER"/>
    <property type="match status" value="1"/>
</dbReference>
<dbReference type="PANTHER" id="PTHR22950:SF692">
    <property type="entry name" value="TRANSMEMBRANE AMINO ACID TRANSPORTER FAMILY PROTEIN"/>
    <property type="match status" value="1"/>
</dbReference>
<dbReference type="Pfam" id="PF01490">
    <property type="entry name" value="Aa_trans"/>
    <property type="match status" value="1"/>
</dbReference>
<gene>
    <name evidence="3" type="primary">AVT1D</name>
    <name evidence="5" type="ordered locus">At5g02180</name>
    <name evidence="6" type="ORF">T7H20.230</name>
</gene>
<comment type="subcellular location">
    <subcellularLocation>
        <location evidence="1">Membrane</location>
        <topology evidence="1">Multi-pass membrane protein</topology>
    </subcellularLocation>
</comment>
<comment type="similarity">
    <text evidence="4">Belongs to the amino acid/polyamine transporter 2 family. Amino acid/auxin permease (AAAP) (TC 2.A.18.5) subfamily.</text>
</comment>
<comment type="sequence caution" evidence="4">
    <conflict type="erroneous gene model prediction">
        <sequence resource="EMBL-CDS" id="CAB82991"/>
    </conflict>
</comment>
<keyword id="KW-0029">Amino-acid transport</keyword>
<keyword id="KW-0472">Membrane</keyword>
<keyword id="KW-1185">Reference proteome</keyword>
<keyword id="KW-0812">Transmembrane</keyword>
<keyword id="KW-1133">Transmembrane helix</keyword>
<keyword id="KW-0813">Transport</keyword>
<evidence type="ECO:0000255" key="1"/>
<evidence type="ECO:0000256" key="2">
    <source>
        <dbReference type="SAM" id="MobiDB-lite"/>
    </source>
</evidence>
<evidence type="ECO:0000303" key="3">
    <source>
    </source>
</evidence>
<evidence type="ECO:0000305" key="4"/>
<evidence type="ECO:0000312" key="5">
    <source>
        <dbReference type="Araport" id="AT5G02180"/>
    </source>
</evidence>
<evidence type="ECO:0000312" key="6">
    <source>
        <dbReference type="EMBL" id="CAB82991.1"/>
    </source>
</evidence>